<comment type="function">
    <text evidence="1">May be involved in the transport of PQQ or its precursor to the periplasm.</text>
</comment>
<comment type="pathway">
    <text evidence="1">Cofactor biosynthesis; pyrroloquinoline quinone biosynthesis.</text>
</comment>
<comment type="similarity">
    <text evidence="1">Belongs to the PqqB family.</text>
</comment>
<comment type="sequence caution" evidence="2">
    <conflict type="erroneous initiation">
        <sequence resource="EMBL-CDS" id="ACS39594"/>
    </conflict>
</comment>
<keyword id="KW-0002">3D-structure</keyword>
<keyword id="KW-0884">PQQ biosynthesis</keyword>
<keyword id="KW-1185">Reference proteome</keyword>
<keyword id="KW-0813">Transport</keyword>
<feature type="chain" id="PRO_0000220001" description="Coenzyme PQQ synthesis protein B">
    <location>
        <begin position="1"/>
        <end position="299"/>
    </location>
</feature>
<feature type="strand" evidence="3">
    <location>
        <begin position="2"/>
        <end position="7"/>
    </location>
</feature>
<feature type="helix" evidence="3">
    <location>
        <begin position="22"/>
        <end position="29"/>
    </location>
</feature>
<feature type="strand" evidence="3">
    <location>
        <begin position="39"/>
        <end position="54"/>
    </location>
</feature>
<feature type="helix" evidence="3">
    <location>
        <begin position="60"/>
        <end position="66"/>
    </location>
</feature>
<feature type="helix" evidence="3">
    <location>
        <begin position="68"/>
        <end position="70"/>
    </location>
</feature>
<feature type="strand" evidence="3">
    <location>
        <begin position="74"/>
        <end position="77"/>
    </location>
</feature>
<feature type="strand" evidence="3">
    <location>
        <begin position="80"/>
        <end position="85"/>
    </location>
</feature>
<feature type="helix" evidence="3">
    <location>
        <begin position="91"/>
        <end position="94"/>
    </location>
</feature>
<feature type="helix" evidence="3">
    <location>
        <begin position="95"/>
        <end position="98"/>
    </location>
</feature>
<feature type="turn" evidence="3">
    <location>
        <begin position="99"/>
        <end position="101"/>
    </location>
</feature>
<feature type="strand" evidence="3">
    <location>
        <begin position="106"/>
        <end position="110"/>
    </location>
</feature>
<feature type="helix" evidence="3">
    <location>
        <begin position="112"/>
        <end position="119"/>
    </location>
</feature>
<feature type="helix" evidence="3">
    <location>
        <begin position="122"/>
        <end position="126"/>
    </location>
</feature>
<feature type="turn" evidence="3">
    <location>
        <begin position="129"/>
        <end position="131"/>
    </location>
</feature>
<feature type="strand" evidence="3">
    <location>
        <begin position="132"/>
        <end position="136"/>
    </location>
</feature>
<feature type="strand" evidence="3">
    <location>
        <begin position="142"/>
        <end position="146"/>
    </location>
</feature>
<feature type="strand" evidence="3">
    <location>
        <begin position="149"/>
        <end position="155"/>
    </location>
</feature>
<feature type="helix" evidence="3">
    <location>
        <begin position="162"/>
        <end position="164"/>
    </location>
</feature>
<feature type="strand" evidence="3">
    <location>
        <begin position="171"/>
        <end position="173"/>
    </location>
</feature>
<feature type="strand" evidence="3">
    <location>
        <begin position="178"/>
        <end position="185"/>
    </location>
</feature>
<feature type="strand" evidence="3">
    <location>
        <begin position="188"/>
        <end position="194"/>
    </location>
</feature>
<feature type="helix" evidence="3">
    <location>
        <begin position="201"/>
        <end position="207"/>
    </location>
</feature>
<feature type="strand" evidence="3">
    <location>
        <begin position="211"/>
        <end position="216"/>
    </location>
</feature>
<feature type="helix" evidence="3">
    <location>
        <begin position="224"/>
        <end position="227"/>
    </location>
</feature>
<feature type="helix" evidence="3">
    <location>
        <begin position="235"/>
        <end position="238"/>
    </location>
</feature>
<feature type="strand" evidence="3">
    <location>
        <begin position="243"/>
        <end position="245"/>
    </location>
</feature>
<feature type="helix" evidence="3">
    <location>
        <begin position="249"/>
        <end position="252"/>
    </location>
</feature>
<feature type="turn" evidence="3">
    <location>
        <begin position="253"/>
        <end position="255"/>
    </location>
</feature>
<feature type="strand" evidence="3">
    <location>
        <begin position="259"/>
        <end position="266"/>
    </location>
</feature>
<feature type="helix" evidence="3">
    <location>
        <begin position="271"/>
        <end position="273"/>
    </location>
</feature>
<feature type="helix" evidence="3">
    <location>
        <begin position="278"/>
        <end position="285"/>
    </location>
</feature>
<feature type="strand" evidence="3">
    <location>
        <begin position="288"/>
        <end position="290"/>
    </location>
</feature>
<feature type="strand" evidence="3">
    <location>
        <begin position="296"/>
        <end position="298"/>
    </location>
</feature>
<accession>Q49149</accession>
<accession>C5B130</accession>
<gene>
    <name evidence="1" type="primary">pqqB</name>
    <name type="synonym">pqqG</name>
    <name type="ordered locus">MexAM1_META1p1750</name>
</gene>
<organism>
    <name type="scientific">Methylorubrum extorquens (strain ATCC 14718 / DSM 1338 / JCM 2805 / NCIMB 9133 / AM1)</name>
    <name type="common">Methylobacterium extorquens</name>
    <dbReference type="NCBI Taxonomy" id="272630"/>
    <lineage>
        <taxon>Bacteria</taxon>
        <taxon>Pseudomonadati</taxon>
        <taxon>Pseudomonadota</taxon>
        <taxon>Alphaproteobacteria</taxon>
        <taxon>Hyphomicrobiales</taxon>
        <taxon>Methylobacteriaceae</taxon>
        <taxon>Methylorubrum</taxon>
    </lineage>
</organism>
<sequence length="299" mass="32166">MHVVILGSAAGGGVPQWNCRCSICSLAWAGDSRVRPRTQSSIAVSPDGERWLLLNASPDIRQQIQANPQMHPREGLRHSPIHAVLLTNGDVDHVAGLLTLREGQPFTLYATPGILASVSDNRVFDVMAADVVKRQTIALNETFEPVPGLSVTLFSVPGKVPLWLEDASMEIGAETETTVGTMIEAGGKRLAYIPGCARVTEDLKARIAGADALLFDGTVLEDDDMIRAGVGTKTGWRMGHIQMNGETGSIASLADIEIGRRVFVHINNTNPVLIEDSYERASVEARGWTVAHDGLTLDL</sequence>
<evidence type="ECO:0000255" key="1">
    <source>
        <dbReference type="HAMAP-Rule" id="MF_00653"/>
    </source>
</evidence>
<evidence type="ECO:0000305" key="2"/>
<evidence type="ECO:0007829" key="3">
    <source>
        <dbReference type="PDB" id="4Z7R"/>
    </source>
</evidence>
<name>PQQB_METEA</name>
<proteinExistence type="evidence at protein level"/>
<protein>
    <recommendedName>
        <fullName evidence="1">Coenzyme PQQ synthesis protein B</fullName>
    </recommendedName>
    <alternativeName>
        <fullName>Coenzyme PQQ synthesis protein G</fullName>
    </alternativeName>
    <alternativeName>
        <fullName evidence="1">Pyrroloquinoline quinone biosynthesis protein B</fullName>
    </alternativeName>
</protein>
<dbReference type="EMBL" id="L25889">
    <property type="protein sequence ID" value="AAA17879.1"/>
    <property type="molecule type" value="Unassigned_DNA"/>
</dbReference>
<dbReference type="EMBL" id="CP001510">
    <property type="protein sequence ID" value="ACS39594.1"/>
    <property type="status" value="ALT_INIT"/>
    <property type="molecule type" value="Genomic_DNA"/>
</dbReference>
<dbReference type="PIR" id="B55527">
    <property type="entry name" value="B55527"/>
</dbReference>
<dbReference type="RefSeq" id="WP_003597599.1">
    <property type="nucleotide sequence ID" value="NC_012808.1"/>
</dbReference>
<dbReference type="PDB" id="4Z7R">
    <property type="method" value="X-ray"/>
    <property type="resolution" value="1.98 A"/>
    <property type="chains" value="A/B=1-299"/>
</dbReference>
<dbReference type="PDBsum" id="4Z7R"/>
<dbReference type="SMR" id="Q49149"/>
<dbReference type="STRING" id="272630.MexAM1_META1p1750"/>
<dbReference type="KEGG" id="mea:Mex_1p1750"/>
<dbReference type="eggNOG" id="COG1235">
    <property type="taxonomic scope" value="Bacteria"/>
</dbReference>
<dbReference type="HOGENOM" id="CLU_061120_0_0_5"/>
<dbReference type="OrthoDB" id="9778305at2"/>
<dbReference type="UniPathway" id="UPA00539"/>
<dbReference type="Proteomes" id="UP000009081">
    <property type="component" value="Chromosome"/>
</dbReference>
<dbReference type="GO" id="GO:0018189">
    <property type="term" value="P:pyrroloquinoline quinone biosynthetic process"/>
    <property type="evidence" value="ECO:0007669"/>
    <property type="project" value="UniProtKB-UniRule"/>
</dbReference>
<dbReference type="CDD" id="cd16274">
    <property type="entry name" value="PQQB-like_MBL-fold"/>
    <property type="match status" value="1"/>
</dbReference>
<dbReference type="Gene3D" id="3.60.15.10">
    <property type="entry name" value="Ribonuclease Z/Hydroxyacylglutathione hydrolase-like"/>
    <property type="match status" value="1"/>
</dbReference>
<dbReference type="HAMAP" id="MF_00653">
    <property type="entry name" value="PQQ_syn_PqqB"/>
    <property type="match status" value="1"/>
</dbReference>
<dbReference type="InterPro" id="IPR001279">
    <property type="entry name" value="Metallo-B-lactamas"/>
</dbReference>
<dbReference type="InterPro" id="IPR011842">
    <property type="entry name" value="PQQ_synth_PqqB"/>
</dbReference>
<dbReference type="InterPro" id="IPR036866">
    <property type="entry name" value="RibonucZ/Hydroxyglut_hydro"/>
</dbReference>
<dbReference type="NCBIfam" id="TIGR02108">
    <property type="entry name" value="PQQ_syn_pqqB"/>
    <property type="match status" value="1"/>
</dbReference>
<dbReference type="PANTHER" id="PTHR42663:SF7">
    <property type="entry name" value="COENZYME PQQ SYNTHESIS PROTEIN B"/>
    <property type="match status" value="1"/>
</dbReference>
<dbReference type="PANTHER" id="PTHR42663">
    <property type="entry name" value="HYDROLASE C777.06C-RELATED-RELATED"/>
    <property type="match status" value="1"/>
</dbReference>
<dbReference type="Pfam" id="PF12706">
    <property type="entry name" value="Lactamase_B_2"/>
    <property type="match status" value="1"/>
</dbReference>
<dbReference type="SUPFAM" id="SSF56281">
    <property type="entry name" value="Metallo-hydrolase/oxidoreductase"/>
    <property type="match status" value="1"/>
</dbReference>
<reference key="1">
    <citation type="journal article" date="1994" name="J. Bacteriol.">
        <title>Isolation, phenotypic characterization, and complementation analysis of mutants of Methylobacterium extorquens AM1 unable to synthesize pyrroloquinoline quinone and sequences of pqqD, pqqG, and pqqC.</title>
        <authorList>
            <person name="Morris C.J."/>
            <person name="Biville F."/>
            <person name="Turlin E."/>
            <person name="Lee E."/>
            <person name="Ellermann K."/>
            <person name="Fan W.H."/>
            <person name="Ramamoorthi R."/>
            <person name="Springer A.L."/>
            <person name="Lidstrom M.E."/>
        </authorList>
    </citation>
    <scope>NUCLEOTIDE SEQUENCE [GENOMIC DNA]</scope>
</reference>
<reference key="2">
    <citation type="journal article" date="2009" name="PLoS ONE">
        <title>Methylobacterium genome sequences: a reference blueprint to investigate microbial metabolism of C1 compounds from natural and industrial sources.</title>
        <authorList>
            <person name="Vuilleumier S."/>
            <person name="Chistoserdova L."/>
            <person name="Lee M.-C."/>
            <person name="Bringel F."/>
            <person name="Lajus A."/>
            <person name="Zhou Y."/>
            <person name="Gourion B."/>
            <person name="Barbe V."/>
            <person name="Chang J."/>
            <person name="Cruveiller S."/>
            <person name="Dossat C."/>
            <person name="Gillett W."/>
            <person name="Gruffaz C."/>
            <person name="Haugen E."/>
            <person name="Hourcade E."/>
            <person name="Levy R."/>
            <person name="Mangenot S."/>
            <person name="Muller E."/>
            <person name="Nadalig T."/>
            <person name="Pagni M."/>
            <person name="Penny C."/>
            <person name="Peyraud R."/>
            <person name="Robinson D.G."/>
            <person name="Roche D."/>
            <person name="Rouy Z."/>
            <person name="Saenampechek C."/>
            <person name="Salvignol G."/>
            <person name="Vallenet D."/>
            <person name="Wu Z."/>
            <person name="Marx C.J."/>
            <person name="Vorholt J.A."/>
            <person name="Olson M.V."/>
            <person name="Kaul R."/>
            <person name="Weissenbach J."/>
            <person name="Medigue C."/>
            <person name="Lidstrom M.E."/>
        </authorList>
    </citation>
    <scope>NUCLEOTIDE SEQUENCE [LARGE SCALE GENOMIC DNA]</scope>
    <source>
        <strain>ATCC 14718 / DSM 1338 / JCM 2805 / NCIMB 9133 / AM1</strain>
    </source>
</reference>